<protein>
    <recommendedName>
        <fullName evidence="1">Large ribosomal subunit protein uL18</fullName>
    </recommendedName>
    <alternativeName>
        <fullName evidence="2">50S ribosomal protein L18</fullName>
    </alternativeName>
</protein>
<dbReference type="EMBL" id="BA000033">
    <property type="protein sequence ID" value="BAB96018.1"/>
    <property type="molecule type" value="Genomic_DNA"/>
</dbReference>
<dbReference type="RefSeq" id="WP_000623881.1">
    <property type="nucleotide sequence ID" value="NC_003923.1"/>
</dbReference>
<dbReference type="PDB" id="8Y36">
    <property type="method" value="EM"/>
    <property type="resolution" value="2.65 A"/>
    <property type="chains" value="M=1-119"/>
</dbReference>
<dbReference type="PDB" id="8Y37">
    <property type="method" value="EM"/>
    <property type="resolution" value="2.53 A"/>
    <property type="chains" value="M=1-119"/>
</dbReference>
<dbReference type="PDB" id="8Y38">
    <property type="method" value="EM"/>
    <property type="resolution" value="2.58 A"/>
    <property type="chains" value="M=1-119"/>
</dbReference>
<dbReference type="PDB" id="8Y39">
    <property type="method" value="EM"/>
    <property type="resolution" value="3.60 A"/>
    <property type="chains" value="M=1-119"/>
</dbReference>
<dbReference type="PDBsum" id="8Y36"/>
<dbReference type="PDBsum" id="8Y37"/>
<dbReference type="PDBsum" id="8Y38"/>
<dbReference type="PDBsum" id="8Y39"/>
<dbReference type="EMDB" id="EMD-38873"/>
<dbReference type="EMDB" id="EMD-38874"/>
<dbReference type="EMDB" id="EMD-38875"/>
<dbReference type="EMDB" id="EMD-38876"/>
<dbReference type="SMR" id="Q7A085"/>
<dbReference type="KEGG" id="sam:MW2153"/>
<dbReference type="HOGENOM" id="CLU_098841_0_1_9"/>
<dbReference type="GO" id="GO:0022625">
    <property type="term" value="C:cytosolic large ribosomal subunit"/>
    <property type="evidence" value="ECO:0007669"/>
    <property type="project" value="TreeGrafter"/>
</dbReference>
<dbReference type="GO" id="GO:0008097">
    <property type="term" value="F:5S rRNA binding"/>
    <property type="evidence" value="ECO:0007669"/>
    <property type="project" value="TreeGrafter"/>
</dbReference>
<dbReference type="GO" id="GO:0003735">
    <property type="term" value="F:structural constituent of ribosome"/>
    <property type="evidence" value="ECO:0007669"/>
    <property type="project" value="InterPro"/>
</dbReference>
<dbReference type="GO" id="GO:0006412">
    <property type="term" value="P:translation"/>
    <property type="evidence" value="ECO:0007669"/>
    <property type="project" value="UniProtKB-UniRule"/>
</dbReference>
<dbReference type="CDD" id="cd00432">
    <property type="entry name" value="Ribosomal_L18_L5e"/>
    <property type="match status" value="1"/>
</dbReference>
<dbReference type="FunFam" id="3.30.420.100:FF:000001">
    <property type="entry name" value="50S ribosomal protein L18"/>
    <property type="match status" value="1"/>
</dbReference>
<dbReference type="Gene3D" id="3.30.420.100">
    <property type="match status" value="1"/>
</dbReference>
<dbReference type="HAMAP" id="MF_01337_B">
    <property type="entry name" value="Ribosomal_uL18_B"/>
    <property type="match status" value="1"/>
</dbReference>
<dbReference type="InterPro" id="IPR004389">
    <property type="entry name" value="Ribosomal_uL18_bac-type"/>
</dbReference>
<dbReference type="InterPro" id="IPR005484">
    <property type="entry name" value="Ribosomal_uL18_bac/euk"/>
</dbReference>
<dbReference type="NCBIfam" id="TIGR00060">
    <property type="entry name" value="L18_bact"/>
    <property type="match status" value="1"/>
</dbReference>
<dbReference type="PANTHER" id="PTHR12899">
    <property type="entry name" value="39S RIBOSOMAL PROTEIN L18, MITOCHONDRIAL"/>
    <property type="match status" value="1"/>
</dbReference>
<dbReference type="PANTHER" id="PTHR12899:SF3">
    <property type="entry name" value="LARGE RIBOSOMAL SUBUNIT PROTEIN UL18M"/>
    <property type="match status" value="1"/>
</dbReference>
<dbReference type="Pfam" id="PF00861">
    <property type="entry name" value="Ribosomal_L18p"/>
    <property type="match status" value="1"/>
</dbReference>
<dbReference type="SUPFAM" id="SSF53137">
    <property type="entry name" value="Translational machinery components"/>
    <property type="match status" value="1"/>
</dbReference>
<reference key="1">
    <citation type="journal article" date="2002" name="Lancet">
        <title>Genome and virulence determinants of high virulence community-acquired MRSA.</title>
        <authorList>
            <person name="Baba T."/>
            <person name="Takeuchi F."/>
            <person name="Kuroda M."/>
            <person name="Yuzawa H."/>
            <person name="Aoki K."/>
            <person name="Oguchi A."/>
            <person name="Nagai Y."/>
            <person name="Iwama N."/>
            <person name="Asano K."/>
            <person name="Naimi T."/>
            <person name="Kuroda H."/>
            <person name="Cui L."/>
            <person name="Yamamoto K."/>
            <person name="Hiramatsu K."/>
        </authorList>
    </citation>
    <scope>NUCLEOTIDE SEQUENCE [LARGE SCALE GENOMIC DNA]</scope>
    <source>
        <strain>MW2</strain>
    </source>
</reference>
<evidence type="ECO:0000255" key="1">
    <source>
        <dbReference type="HAMAP-Rule" id="MF_01337"/>
    </source>
</evidence>
<evidence type="ECO:0000305" key="2"/>
<name>RL18_STAAW</name>
<organism>
    <name type="scientific">Staphylococcus aureus (strain MW2)</name>
    <dbReference type="NCBI Taxonomy" id="196620"/>
    <lineage>
        <taxon>Bacteria</taxon>
        <taxon>Bacillati</taxon>
        <taxon>Bacillota</taxon>
        <taxon>Bacilli</taxon>
        <taxon>Bacillales</taxon>
        <taxon>Staphylococcaceae</taxon>
        <taxon>Staphylococcus</taxon>
    </lineage>
</organism>
<feature type="chain" id="PRO_0000131347" description="Large ribosomal subunit protein uL18">
    <location>
        <begin position="1"/>
        <end position="119"/>
    </location>
</feature>
<gene>
    <name evidence="1" type="primary">rplR</name>
    <name type="ordered locus">MW2153</name>
</gene>
<keyword id="KW-0002">3D-structure</keyword>
<keyword id="KW-0687">Ribonucleoprotein</keyword>
<keyword id="KW-0689">Ribosomal protein</keyword>
<keyword id="KW-0694">RNA-binding</keyword>
<keyword id="KW-0699">rRNA-binding</keyword>
<accession>Q7A085</accession>
<comment type="function">
    <text evidence="1">This is one of the proteins that bind and probably mediate the attachment of the 5S RNA into the large ribosomal subunit, where it forms part of the central protuberance.</text>
</comment>
<comment type="subunit">
    <text evidence="1">Part of the 50S ribosomal subunit; part of the 5S rRNA/L5/L18/L25 subcomplex. Contacts the 5S and 23S rRNAs.</text>
</comment>
<comment type="similarity">
    <text evidence="1">Belongs to the universal ribosomal protein uL18 family.</text>
</comment>
<sequence>MISKIDKNKVRLKRHARVRTNLSGTAEKPRLNVYRSNKHIYAQIIDDNKGVTLAQASSKDSDIATTATKVELATKVGEAIAKKAADKGIKEIVFDRGGYLYHGRVKALAEAARESGLEF</sequence>
<proteinExistence type="evidence at protein level"/>